<comment type="function">
    <text evidence="1">Located on the platform of the 30S subunit, it bridges several disparate RNA helices of the 16S rRNA. Forms part of the Shine-Dalgarno cleft in the 70S ribosome.</text>
</comment>
<comment type="subunit">
    <text evidence="1">Part of the 30S ribosomal subunit. Interacts with proteins S7 and S18. Binds to IF-3.</text>
</comment>
<comment type="similarity">
    <text evidence="1">Belongs to the universal ribosomal protein uS11 family.</text>
</comment>
<feature type="chain" id="PRO_0000294879" description="Small ribosomal subunit protein uS11">
    <location>
        <begin position="1"/>
        <end position="130"/>
    </location>
</feature>
<name>RS11_SYNFM</name>
<reference key="1">
    <citation type="submission" date="2006-10" db="EMBL/GenBank/DDBJ databases">
        <title>Complete sequence of Syntrophobacter fumaroxidans MPOB.</title>
        <authorList>
            <consortium name="US DOE Joint Genome Institute"/>
            <person name="Copeland A."/>
            <person name="Lucas S."/>
            <person name="Lapidus A."/>
            <person name="Barry K."/>
            <person name="Detter J.C."/>
            <person name="Glavina del Rio T."/>
            <person name="Hammon N."/>
            <person name="Israni S."/>
            <person name="Pitluck S."/>
            <person name="Goltsman E.G."/>
            <person name="Martinez M."/>
            <person name="Schmutz J."/>
            <person name="Larimer F."/>
            <person name="Land M."/>
            <person name="Hauser L."/>
            <person name="Kyrpides N."/>
            <person name="Kim E."/>
            <person name="Boone D.R."/>
            <person name="Brockman F."/>
            <person name="Culley D."/>
            <person name="Ferry J."/>
            <person name="Gunsalus R."/>
            <person name="McInerney M.J."/>
            <person name="Morrison M."/>
            <person name="Plugge C."/>
            <person name="Rohlin L."/>
            <person name="Scholten J."/>
            <person name="Sieber J."/>
            <person name="Stams A.J.M."/>
            <person name="Worm P."/>
            <person name="Henstra A.M."/>
            <person name="Richardson P."/>
        </authorList>
    </citation>
    <scope>NUCLEOTIDE SEQUENCE [LARGE SCALE GENOMIC DNA]</scope>
    <source>
        <strain>DSM 10017 / MPOB</strain>
    </source>
</reference>
<sequence length="130" mass="13936">MAREKAASRKKKERKNILNGIAHIRSTFNNTIVTITDASGNAISWSSAGSQGFKGSRKSTPFAAQVAAEIAAKKAMEHGVQNIEVYVKGPGSGREAALRALQAAGFNITVIKDVTPIPHNGCRPPKRRRV</sequence>
<keyword id="KW-1185">Reference proteome</keyword>
<keyword id="KW-0687">Ribonucleoprotein</keyword>
<keyword id="KW-0689">Ribosomal protein</keyword>
<keyword id="KW-0694">RNA-binding</keyword>
<keyword id="KW-0699">rRNA-binding</keyword>
<evidence type="ECO:0000255" key="1">
    <source>
        <dbReference type="HAMAP-Rule" id="MF_01310"/>
    </source>
</evidence>
<evidence type="ECO:0000305" key="2"/>
<gene>
    <name evidence="1" type="primary">rpsK</name>
    <name type="ordered locus">Sfum_1580</name>
</gene>
<proteinExistence type="inferred from homology"/>
<accession>A0LIL5</accession>
<dbReference type="EMBL" id="CP000478">
    <property type="protein sequence ID" value="ABK17267.1"/>
    <property type="molecule type" value="Genomic_DNA"/>
</dbReference>
<dbReference type="RefSeq" id="WP_011698437.1">
    <property type="nucleotide sequence ID" value="NC_008554.1"/>
</dbReference>
<dbReference type="SMR" id="A0LIL5"/>
<dbReference type="FunCoup" id="A0LIL5">
    <property type="interactions" value="589"/>
</dbReference>
<dbReference type="STRING" id="335543.Sfum_1580"/>
<dbReference type="KEGG" id="sfu:Sfum_1580"/>
<dbReference type="eggNOG" id="COG0100">
    <property type="taxonomic scope" value="Bacteria"/>
</dbReference>
<dbReference type="HOGENOM" id="CLU_072439_5_0_7"/>
<dbReference type="InParanoid" id="A0LIL5"/>
<dbReference type="OrthoDB" id="9806415at2"/>
<dbReference type="Proteomes" id="UP000001784">
    <property type="component" value="Chromosome"/>
</dbReference>
<dbReference type="GO" id="GO:1990904">
    <property type="term" value="C:ribonucleoprotein complex"/>
    <property type="evidence" value="ECO:0007669"/>
    <property type="project" value="UniProtKB-KW"/>
</dbReference>
<dbReference type="GO" id="GO:0005840">
    <property type="term" value="C:ribosome"/>
    <property type="evidence" value="ECO:0007669"/>
    <property type="project" value="UniProtKB-KW"/>
</dbReference>
<dbReference type="GO" id="GO:0019843">
    <property type="term" value="F:rRNA binding"/>
    <property type="evidence" value="ECO:0007669"/>
    <property type="project" value="UniProtKB-UniRule"/>
</dbReference>
<dbReference type="GO" id="GO:0003735">
    <property type="term" value="F:structural constituent of ribosome"/>
    <property type="evidence" value="ECO:0007669"/>
    <property type="project" value="InterPro"/>
</dbReference>
<dbReference type="GO" id="GO:0006412">
    <property type="term" value="P:translation"/>
    <property type="evidence" value="ECO:0007669"/>
    <property type="project" value="UniProtKB-UniRule"/>
</dbReference>
<dbReference type="FunFam" id="3.30.420.80:FF:000001">
    <property type="entry name" value="30S ribosomal protein S11"/>
    <property type="match status" value="1"/>
</dbReference>
<dbReference type="Gene3D" id="3.30.420.80">
    <property type="entry name" value="Ribosomal protein S11"/>
    <property type="match status" value="1"/>
</dbReference>
<dbReference type="HAMAP" id="MF_01310">
    <property type="entry name" value="Ribosomal_uS11"/>
    <property type="match status" value="1"/>
</dbReference>
<dbReference type="InterPro" id="IPR001971">
    <property type="entry name" value="Ribosomal_uS11"/>
</dbReference>
<dbReference type="InterPro" id="IPR019981">
    <property type="entry name" value="Ribosomal_uS11_bac-type"/>
</dbReference>
<dbReference type="InterPro" id="IPR018102">
    <property type="entry name" value="Ribosomal_uS11_CS"/>
</dbReference>
<dbReference type="InterPro" id="IPR036967">
    <property type="entry name" value="Ribosomal_uS11_sf"/>
</dbReference>
<dbReference type="NCBIfam" id="NF003698">
    <property type="entry name" value="PRK05309.1"/>
    <property type="match status" value="1"/>
</dbReference>
<dbReference type="NCBIfam" id="TIGR03632">
    <property type="entry name" value="uS11_bact"/>
    <property type="match status" value="1"/>
</dbReference>
<dbReference type="PANTHER" id="PTHR11759">
    <property type="entry name" value="40S RIBOSOMAL PROTEIN S14/30S RIBOSOMAL PROTEIN S11"/>
    <property type="match status" value="1"/>
</dbReference>
<dbReference type="Pfam" id="PF00411">
    <property type="entry name" value="Ribosomal_S11"/>
    <property type="match status" value="1"/>
</dbReference>
<dbReference type="PIRSF" id="PIRSF002131">
    <property type="entry name" value="Ribosomal_S11"/>
    <property type="match status" value="1"/>
</dbReference>
<dbReference type="SUPFAM" id="SSF53137">
    <property type="entry name" value="Translational machinery components"/>
    <property type="match status" value="1"/>
</dbReference>
<dbReference type="PROSITE" id="PS00054">
    <property type="entry name" value="RIBOSOMAL_S11"/>
    <property type="match status" value="1"/>
</dbReference>
<organism>
    <name type="scientific">Syntrophobacter fumaroxidans (strain DSM 10017 / MPOB)</name>
    <dbReference type="NCBI Taxonomy" id="335543"/>
    <lineage>
        <taxon>Bacteria</taxon>
        <taxon>Pseudomonadati</taxon>
        <taxon>Thermodesulfobacteriota</taxon>
        <taxon>Syntrophobacteria</taxon>
        <taxon>Syntrophobacterales</taxon>
        <taxon>Syntrophobacteraceae</taxon>
        <taxon>Syntrophobacter</taxon>
    </lineage>
</organism>
<protein>
    <recommendedName>
        <fullName evidence="1">Small ribosomal subunit protein uS11</fullName>
    </recommendedName>
    <alternativeName>
        <fullName evidence="2">30S ribosomal protein S11</fullName>
    </alternativeName>
</protein>